<accession>Q7XZU2</accession>
<accession>Q8LPQ2</accession>
<accession>Q9LXL2</accession>
<feature type="chain" id="PRO_0000421969" description="Phosphoinositide phosphatase SAC3">
    <location>
        <begin position="1"/>
        <end position="818"/>
    </location>
</feature>
<feature type="domain" description="SAC" evidence="2">
    <location>
        <begin position="153"/>
        <end position="546"/>
    </location>
</feature>
<feature type="region of interest" description="Disordered" evidence="3">
    <location>
        <begin position="426"/>
        <end position="459"/>
    </location>
</feature>
<feature type="region of interest" description="Disordered" evidence="3">
    <location>
        <begin position="759"/>
        <end position="800"/>
    </location>
</feature>
<feature type="short sequence motif" description="Phosphatase catalytic core">
    <location>
        <begin position="482"/>
        <end position="493"/>
    </location>
</feature>
<feature type="compositionally biased region" description="Polar residues" evidence="3">
    <location>
        <begin position="759"/>
        <end position="780"/>
    </location>
</feature>
<feature type="compositionally biased region" description="Basic and acidic residues" evidence="3">
    <location>
        <begin position="789"/>
        <end position="800"/>
    </location>
</feature>
<evidence type="ECO:0000250" key="1"/>
<evidence type="ECO:0000255" key="2">
    <source>
        <dbReference type="PROSITE-ProRule" id="PRU00183"/>
    </source>
</evidence>
<evidence type="ECO:0000256" key="3">
    <source>
        <dbReference type="SAM" id="MobiDB-lite"/>
    </source>
</evidence>
<evidence type="ECO:0000269" key="4">
    <source>
    </source>
</evidence>
<evidence type="ECO:0000305" key="5"/>
<name>SAC3_ARATH</name>
<dbReference type="EC" id="3.1.3.-"/>
<dbReference type="EMBL" id="AY227246">
    <property type="protein sequence ID" value="AAP49836.1"/>
    <property type="molecule type" value="mRNA"/>
</dbReference>
<dbReference type="EMBL" id="AL353871">
    <property type="protein sequence ID" value="CAB89043.1"/>
    <property type="status" value="ALT_SEQ"/>
    <property type="molecule type" value="Genomic_DNA"/>
</dbReference>
<dbReference type="EMBL" id="CP002686">
    <property type="protein sequence ID" value="AEE77775.1"/>
    <property type="molecule type" value="Genomic_DNA"/>
</dbReference>
<dbReference type="EMBL" id="AY094477">
    <property type="protein sequence ID" value="AAM19844.1"/>
    <property type="status" value="ALT_FRAME"/>
    <property type="molecule type" value="mRNA"/>
</dbReference>
<dbReference type="PIR" id="T49236">
    <property type="entry name" value="T49236"/>
</dbReference>
<dbReference type="RefSeq" id="NP_189908.2">
    <molecule id="Q7XZU2-1"/>
    <property type="nucleotide sequence ID" value="NM_114190.3"/>
</dbReference>
<dbReference type="SMR" id="Q7XZU2"/>
<dbReference type="FunCoup" id="Q7XZU2">
    <property type="interactions" value="4288"/>
</dbReference>
<dbReference type="STRING" id="3702.Q7XZU2"/>
<dbReference type="GlyGen" id="Q7XZU2">
    <property type="glycosylation" value="1 site"/>
</dbReference>
<dbReference type="iPTMnet" id="Q7XZU2"/>
<dbReference type="PaxDb" id="3702-AT3G43220.1"/>
<dbReference type="ProteomicsDB" id="232726">
    <molecule id="Q7XZU2-1"/>
</dbReference>
<dbReference type="EnsemblPlants" id="AT3G43220.1">
    <molecule id="Q7XZU2-1"/>
    <property type="protein sequence ID" value="AT3G43220.1"/>
    <property type="gene ID" value="AT3G43220"/>
</dbReference>
<dbReference type="GeneID" id="823397"/>
<dbReference type="Gramene" id="AT3G43220.1">
    <molecule id="Q7XZU2-1"/>
    <property type="protein sequence ID" value="AT3G43220.1"/>
    <property type="gene ID" value="AT3G43220"/>
</dbReference>
<dbReference type="KEGG" id="ath:AT3G43220"/>
<dbReference type="Araport" id="AT3G43220"/>
<dbReference type="TAIR" id="AT3G43220">
    <property type="gene designation" value="SAC3"/>
</dbReference>
<dbReference type="eggNOG" id="KOG1888">
    <property type="taxonomic scope" value="Eukaryota"/>
</dbReference>
<dbReference type="InParanoid" id="Q7XZU2"/>
<dbReference type="PhylomeDB" id="Q7XZU2"/>
<dbReference type="BioCyc" id="ARA:AT3G43220-MONOMER"/>
<dbReference type="PRO" id="PR:Q7XZU2"/>
<dbReference type="Proteomes" id="UP000006548">
    <property type="component" value="Chromosome 3"/>
</dbReference>
<dbReference type="ExpressionAtlas" id="Q7XZU2">
    <property type="expression patterns" value="baseline and differential"/>
</dbReference>
<dbReference type="GO" id="GO:0005774">
    <property type="term" value="C:vacuolar membrane"/>
    <property type="evidence" value="ECO:0007669"/>
    <property type="project" value="UniProtKB-SubCell"/>
</dbReference>
<dbReference type="GO" id="GO:0043813">
    <property type="term" value="F:phosphatidylinositol-3,5-bisphosphate 5-phosphatase activity"/>
    <property type="evidence" value="ECO:0007669"/>
    <property type="project" value="InterPro"/>
</dbReference>
<dbReference type="GO" id="GO:0046856">
    <property type="term" value="P:phosphatidylinositol dephosphorylation"/>
    <property type="evidence" value="ECO:0007669"/>
    <property type="project" value="InterPro"/>
</dbReference>
<dbReference type="InterPro" id="IPR043573">
    <property type="entry name" value="Fig4-like"/>
</dbReference>
<dbReference type="InterPro" id="IPR002013">
    <property type="entry name" value="SAC_dom"/>
</dbReference>
<dbReference type="PANTHER" id="PTHR45738:SF25">
    <property type="entry name" value="PHOSPHOINOSITIDE PHOSPHATASE SAC3-RELATED"/>
    <property type="match status" value="1"/>
</dbReference>
<dbReference type="PANTHER" id="PTHR45738">
    <property type="entry name" value="POLYPHOSPHOINOSITIDE PHOSPHATASE"/>
    <property type="match status" value="1"/>
</dbReference>
<dbReference type="Pfam" id="PF02383">
    <property type="entry name" value="Syja_N"/>
    <property type="match status" value="1"/>
</dbReference>
<dbReference type="PROSITE" id="PS50275">
    <property type="entry name" value="SAC"/>
    <property type="match status" value="1"/>
</dbReference>
<proteinExistence type="evidence at transcript level"/>
<organism>
    <name type="scientific">Arabidopsis thaliana</name>
    <name type="common">Mouse-ear cress</name>
    <dbReference type="NCBI Taxonomy" id="3702"/>
    <lineage>
        <taxon>Eukaryota</taxon>
        <taxon>Viridiplantae</taxon>
        <taxon>Streptophyta</taxon>
        <taxon>Embryophyta</taxon>
        <taxon>Tracheophyta</taxon>
        <taxon>Spermatophyta</taxon>
        <taxon>Magnoliopsida</taxon>
        <taxon>eudicotyledons</taxon>
        <taxon>Gunneridae</taxon>
        <taxon>Pentapetalae</taxon>
        <taxon>rosids</taxon>
        <taxon>malvids</taxon>
        <taxon>Brassicales</taxon>
        <taxon>Brassicaceae</taxon>
        <taxon>Camelineae</taxon>
        <taxon>Arabidopsis</taxon>
    </lineage>
</organism>
<reference key="1">
    <citation type="journal article" date="2003" name="Plant Physiol.">
        <title>The SAC domain-containing protein gene family in Arabidopsis.</title>
        <authorList>
            <person name="Zhong R."/>
            <person name="Ye Z.-H."/>
        </authorList>
    </citation>
    <scope>NUCLEOTIDE SEQUENCE [MRNA]</scope>
    <scope>GENE FAMILY</scope>
    <scope>DOMAIN</scope>
    <scope>TISSUE SPECIFICITY</scope>
</reference>
<reference key="2">
    <citation type="journal article" date="2000" name="Nature">
        <title>Sequence and analysis of chromosome 3 of the plant Arabidopsis thaliana.</title>
        <authorList>
            <person name="Salanoubat M."/>
            <person name="Lemcke K."/>
            <person name="Rieger M."/>
            <person name="Ansorge W."/>
            <person name="Unseld M."/>
            <person name="Fartmann B."/>
            <person name="Valle G."/>
            <person name="Bloecker H."/>
            <person name="Perez-Alonso M."/>
            <person name="Obermaier B."/>
            <person name="Delseny M."/>
            <person name="Boutry M."/>
            <person name="Grivell L.A."/>
            <person name="Mache R."/>
            <person name="Puigdomenech P."/>
            <person name="De Simone V."/>
            <person name="Choisne N."/>
            <person name="Artiguenave F."/>
            <person name="Robert C."/>
            <person name="Brottier P."/>
            <person name="Wincker P."/>
            <person name="Cattolico L."/>
            <person name="Weissenbach J."/>
            <person name="Saurin W."/>
            <person name="Quetier F."/>
            <person name="Schaefer M."/>
            <person name="Mueller-Auer S."/>
            <person name="Gabel C."/>
            <person name="Fuchs M."/>
            <person name="Benes V."/>
            <person name="Wurmbach E."/>
            <person name="Drzonek H."/>
            <person name="Erfle H."/>
            <person name="Jordan N."/>
            <person name="Bangert S."/>
            <person name="Wiedelmann R."/>
            <person name="Kranz H."/>
            <person name="Voss H."/>
            <person name="Holland R."/>
            <person name="Brandt P."/>
            <person name="Nyakatura G."/>
            <person name="Vezzi A."/>
            <person name="D'Angelo M."/>
            <person name="Pallavicini A."/>
            <person name="Toppo S."/>
            <person name="Simionati B."/>
            <person name="Conrad A."/>
            <person name="Hornischer K."/>
            <person name="Kauer G."/>
            <person name="Loehnert T.-H."/>
            <person name="Nordsiek G."/>
            <person name="Reichelt J."/>
            <person name="Scharfe M."/>
            <person name="Schoen O."/>
            <person name="Bargues M."/>
            <person name="Terol J."/>
            <person name="Climent J."/>
            <person name="Navarro P."/>
            <person name="Collado C."/>
            <person name="Perez-Perez A."/>
            <person name="Ottenwaelder B."/>
            <person name="Duchemin D."/>
            <person name="Cooke R."/>
            <person name="Laudie M."/>
            <person name="Berger-Llauro C."/>
            <person name="Purnelle B."/>
            <person name="Masuy D."/>
            <person name="de Haan M."/>
            <person name="Maarse A.C."/>
            <person name="Alcaraz J.-P."/>
            <person name="Cottet A."/>
            <person name="Casacuberta E."/>
            <person name="Monfort A."/>
            <person name="Argiriou A."/>
            <person name="Flores M."/>
            <person name="Liguori R."/>
            <person name="Vitale D."/>
            <person name="Mannhaupt G."/>
            <person name="Haase D."/>
            <person name="Schoof H."/>
            <person name="Rudd S."/>
            <person name="Zaccaria P."/>
            <person name="Mewes H.-W."/>
            <person name="Mayer K.F.X."/>
            <person name="Kaul S."/>
            <person name="Town C.D."/>
            <person name="Koo H.L."/>
            <person name="Tallon L.J."/>
            <person name="Jenkins J."/>
            <person name="Rooney T."/>
            <person name="Rizzo M."/>
            <person name="Walts A."/>
            <person name="Utterback T."/>
            <person name="Fujii C.Y."/>
            <person name="Shea T.P."/>
            <person name="Creasy T.H."/>
            <person name="Haas B."/>
            <person name="Maiti R."/>
            <person name="Wu D."/>
            <person name="Peterson J."/>
            <person name="Van Aken S."/>
            <person name="Pai G."/>
            <person name="Militscher J."/>
            <person name="Sellers P."/>
            <person name="Gill J.E."/>
            <person name="Feldblyum T.V."/>
            <person name="Preuss D."/>
            <person name="Lin X."/>
            <person name="Nierman W.C."/>
            <person name="Salzberg S.L."/>
            <person name="White O."/>
            <person name="Venter J.C."/>
            <person name="Fraser C.M."/>
            <person name="Kaneko T."/>
            <person name="Nakamura Y."/>
            <person name="Sato S."/>
            <person name="Kato T."/>
            <person name="Asamizu E."/>
            <person name="Sasamoto S."/>
            <person name="Kimura T."/>
            <person name="Idesawa K."/>
            <person name="Kawashima K."/>
            <person name="Kishida Y."/>
            <person name="Kiyokawa C."/>
            <person name="Kohara M."/>
            <person name="Matsumoto M."/>
            <person name="Matsuno A."/>
            <person name="Muraki A."/>
            <person name="Nakayama S."/>
            <person name="Nakazaki N."/>
            <person name="Shinpo S."/>
            <person name="Takeuchi C."/>
            <person name="Wada T."/>
            <person name="Watanabe A."/>
            <person name="Yamada M."/>
            <person name="Yasuda M."/>
            <person name="Tabata S."/>
        </authorList>
    </citation>
    <scope>NUCLEOTIDE SEQUENCE [LARGE SCALE GENOMIC DNA]</scope>
    <source>
        <strain>cv. Columbia</strain>
    </source>
</reference>
<reference key="3">
    <citation type="journal article" date="2017" name="Plant J.">
        <title>Araport11: a complete reannotation of the Arabidopsis thaliana reference genome.</title>
        <authorList>
            <person name="Cheng C.Y."/>
            <person name="Krishnakumar V."/>
            <person name="Chan A.P."/>
            <person name="Thibaud-Nissen F."/>
            <person name="Schobel S."/>
            <person name="Town C.D."/>
        </authorList>
    </citation>
    <scope>GENOME REANNOTATION</scope>
    <source>
        <strain>cv. Columbia</strain>
    </source>
</reference>
<reference key="4">
    <citation type="journal article" date="2003" name="Science">
        <title>Empirical analysis of transcriptional activity in the Arabidopsis genome.</title>
        <authorList>
            <person name="Yamada K."/>
            <person name="Lim J."/>
            <person name="Dale J.M."/>
            <person name="Chen H."/>
            <person name="Shinn P."/>
            <person name="Palm C.J."/>
            <person name="Southwick A.M."/>
            <person name="Wu H.C."/>
            <person name="Kim C.J."/>
            <person name="Nguyen M."/>
            <person name="Pham P.K."/>
            <person name="Cheuk R.F."/>
            <person name="Karlin-Newmann G."/>
            <person name="Liu S.X."/>
            <person name="Lam B."/>
            <person name="Sakano H."/>
            <person name="Wu T."/>
            <person name="Yu G."/>
            <person name="Miranda M."/>
            <person name="Quach H.L."/>
            <person name="Tripp M."/>
            <person name="Chang C.H."/>
            <person name="Lee J.M."/>
            <person name="Toriumi M.J."/>
            <person name="Chan M.M."/>
            <person name="Tang C.C."/>
            <person name="Onodera C.S."/>
            <person name="Deng J.M."/>
            <person name="Akiyama K."/>
            <person name="Ansari Y."/>
            <person name="Arakawa T."/>
            <person name="Banh J."/>
            <person name="Banno F."/>
            <person name="Bowser L."/>
            <person name="Brooks S.Y."/>
            <person name="Carninci P."/>
            <person name="Chao Q."/>
            <person name="Choy N."/>
            <person name="Enju A."/>
            <person name="Goldsmith A.D."/>
            <person name="Gurjal M."/>
            <person name="Hansen N.F."/>
            <person name="Hayashizaki Y."/>
            <person name="Johnson-Hopson C."/>
            <person name="Hsuan V.W."/>
            <person name="Iida K."/>
            <person name="Karnes M."/>
            <person name="Khan S."/>
            <person name="Koesema E."/>
            <person name="Ishida J."/>
            <person name="Jiang P.X."/>
            <person name="Jones T."/>
            <person name="Kawai J."/>
            <person name="Kamiya A."/>
            <person name="Meyers C."/>
            <person name="Nakajima M."/>
            <person name="Narusaka M."/>
            <person name="Seki M."/>
            <person name="Sakurai T."/>
            <person name="Satou M."/>
            <person name="Tamse R."/>
            <person name="Vaysberg M."/>
            <person name="Wallender E.K."/>
            <person name="Wong C."/>
            <person name="Yamamura Y."/>
            <person name="Yuan S."/>
            <person name="Shinozaki K."/>
            <person name="Davis R.W."/>
            <person name="Theologis A."/>
            <person name="Ecker J.R."/>
        </authorList>
    </citation>
    <scope>NUCLEOTIDE SEQUENCE [LARGE SCALE MRNA]</scope>
    <source>
        <strain>cv. Columbia</strain>
    </source>
</reference>
<gene>
    <name type="primary">SAC3</name>
    <name type="ordered locus">At3g43220</name>
    <name type="ORF">F7K15_70</name>
</gene>
<protein>
    <recommendedName>
        <fullName>Phosphoinositide phosphatase SAC3</fullName>
        <shortName>AtSAC3</shortName>
        <ecNumber>3.1.3.-</ecNumber>
    </recommendedName>
    <alternativeName>
        <fullName>Phosphatidylinositol 3,5-bisphosphate 5-phosphatase SAC3</fullName>
    </alternativeName>
    <alternativeName>
        <fullName>Protein SUPPRESSOR OF ACTIN 3</fullName>
    </alternativeName>
    <alternativeName>
        <fullName>SAC domain protein 3</fullName>
    </alternativeName>
</protein>
<sequence length="818" mass="92747">MSSSTDDAGTTTHSLQEFKLFETQSNFYMIGWDGSGVYRVLKIDRLDPSELNISQDSTHYTKKECYELLKRIHEGNKATGGLKLVTLCYGIIGFVKFLGPYYMLLITERRHIGDLFGHSVYAVSKSEIVALHNSTVQCNFANSRDENRYKRLLCMVDLTKDFFFSYSYNVMRSYQKNVCNYETGHNLYEKMFVWNEFLTRGIRHHLRNTLWTVALVYGFFKQASLSESGKDFKITLIARRSRHNAGTRYLKRGVNRNGDVANDVETEQIVSEDVPEDHPMQISSVVQNRGSIPLFWSQETSRLNLKPDIVLSKKEPNYEATRLHFDNLVERYGNPIIILNLIKTKERRPRESILREEFVNAIDFINKDLPEENRLRFLHWDLHKHFRSKTKNVLALLCKVATCALMLTDLFYYQVTPAMTIEDSMSLSSSSDADTGDISPHTSSDDDNGDHDSLEKKSSRSKNIAYGKCDVKPPRLQSGVLRTNCIDCLDRTNVAQYAYGWAALGQQLHVLGIRDVPAIELDDPLAISLMGLYERMGDTLAHQYGGSAAHNKVFSERRGQWRAATQSQEFLRTLQRYYNNAYMDADKQDAINIFLGTFQPEQGMPAIWELRSNSLSNGRNGEMNIGKDERFLVKRCLSDGDFLHESCTPLSAMSSNHESMPQKGFSAPLQHVSHILSESSSDIPVSNDVALSRCTPSMPRKQLFGDVQKVHRFGSDQVYFGGEEDMSSVSNFVDIEWLSSENPCENALFDRSSELTRNLTAETSSTENSVNGVGQSAPTISESGSSSSKGKEPMGTKIREDFPDSFKEWVAYGEALCH</sequence>
<keyword id="KW-0025">Alternative splicing</keyword>
<keyword id="KW-0378">Hydrolase</keyword>
<keyword id="KW-0472">Membrane</keyword>
<keyword id="KW-1185">Reference proteome</keyword>
<keyword id="KW-0926">Vacuole</keyword>
<comment type="function">
    <text evidence="1">The PI(3,5)P2 regulatory complex regulates both the synthesis and turnover of phosphatidylinositol 3,5-bisphosphate (PtdIns(3,5)P2).</text>
</comment>
<comment type="catalytic activity">
    <reaction>
        <text>a 1,2-diacyl-sn-glycero-3-phospho-(1D-myo-inositol-3,5-bisphosphate) + H2O = a 1,2-diacyl-sn-glycero-3-phospho-(1D-myo-inositol-3-phosphate) + phosphate</text>
        <dbReference type="Rhea" id="RHEA:32955"/>
        <dbReference type="ChEBI" id="CHEBI:15377"/>
        <dbReference type="ChEBI" id="CHEBI:43474"/>
        <dbReference type="ChEBI" id="CHEBI:57923"/>
        <dbReference type="ChEBI" id="CHEBI:58088"/>
    </reaction>
</comment>
<comment type="cofactor">
    <cofactor evidence="1">
        <name>Mg(2+)</name>
        <dbReference type="ChEBI" id="CHEBI:18420"/>
    </cofactor>
</comment>
<comment type="subunit">
    <text evidence="1">Component of the PI(3,5)P2 regulatory complex at least composed of ATG18, SAC/FIG4, FAB1 and VAC14.</text>
</comment>
<comment type="subcellular location">
    <subcellularLocation>
        <location evidence="1">Vacuole membrane</location>
        <topology evidence="1">Peripheral membrane protein</topology>
    </subcellularLocation>
</comment>
<comment type="alternative products">
    <event type="alternative splicing"/>
    <isoform>
        <id>Q7XZU2-1</id>
        <name>1</name>
        <sequence type="displayed"/>
    </isoform>
    <text>A number of isoforms are produced. According to EST sequences.</text>
</comment>
<comment type="tissue specificity">
    <text evidence="4">Ubiquitous with a higher level of expression in young seedlings than in other tissues.</text>
</comment>
<comment type="domain">
    <text evidence="1">The phosphatase catalytic core motif (or RXNCXDCLDRTN motif) from the SAC domain is found in metal-independent protein phosphatases and inositol polyphosphate phosphatases.</text>
</comment>
<comment type="sequence caution" evidence="5">
    <conflict type="frameshift">
        <sequence resource="EMBL-CDS" id="AAM19844"/>
    </conflict>
</comment>
<comment type="sequence caution" evidence="5">
    <conflict type="erroneous gene model prediction">
        <sequence resource="EMBL-CDS" id="CAB89043"/>
    </conflict>
</comment>